<evidence type="ECO:0000255" key="1">
    <source>
        <dbReference type="HAMAP-Rule" id="MF_01075"/>
    </source>
</evidence>
<evidence type="ECO:0000305" key="2"/>
<feature type="chain" id="PRO_0000052393" description="K(+)/H(+) antiporter NhaP2">
    <location>
        <begin position="1"/>
        <end position="580"/>
    </location>
</feature>
<feature type="transmembrane region" description="Helical" evidence="1">
    <location>
        <begin position="6"/>
        <end position="26"/>
    </location>
</feature>
<feature type="transmembrane region" description="Helical" evidence="1">
    <location>
        <begin position="34"/>
        <end position="54"/>
    </location>
</feature>
<feature type="transmembrane region" description="Helical" evidence="1">
    <location>
        <begin position="57"/>
        <end position="77"/>
    </location>
</feature>
<feature type="transmembrane region" description="Helical" evidence="1">
    <location>
        <begin position="86"/>
        <end position="106"/>
    </location>
</feature>
<feature type="transmembrane region" description="Helical" evidence="1">
    <location>
        <begin position="108"/>
        <end position="128"/>
    </location>
</feature>
<feature type="transmembrane region" description="Helical" evidence="1">
    <location>
        <begin position="162"/>
        <end position="182"/>
    </location>
</feature>
<feature type="transmembrane region" description="Helical" evidence="1">
    <location>
        <begin position="189"/>
        <end position="209"/>
    </location>
</feature>
<feature type="transmembrane region" description="Helical" evidence="1">
    <location>
        <begin position="217"/>
        <end position="237"/>
    </location>
</feature>
<feature type="transmembrane region" description="Helical" evidence="1">
    <location>
        <begin position="240"/>
        <end position="260"/>
    </location>
</feature>
<feature type="transmembrane region" description="Helical" evidence="1">
    <location>
        <begin position="279"/>
        <end position="299"/>
    </location>
</feature>
<feature type="transmembrane region" description="Helical" evidence="1">
    <location>
        <begin position="302"/>
        <end position="322"/>
    </location>
</feature>
<feature type="transmembrane region" description="Helical" evidence="1">
    <location>
        <begin position="334"/>
        <end position="354"/>
    </location>
</feature>
<feature type="transmembrane region" description="Helical" evidence="1">
    <location>
        <begin position="366"/>
        <end position="386"/>
    </location>
</feature>
<feature type="domain" description="RCK C-terminal" evidence="1">
    <location>
        <begin position="402"/>
        <end position="484"/>
    </location>
</feature>
<name>NHAP2_PSE14</name>
<gene>
    <name evidence="1" type="primary">nhaP2</name>
    <name type="synonym">cvrA</name>
    <name type="ordered locus">PSPPH_0493</name>
</gene>
<organism>
    <name type="scientific">Pseudomonas savastanoi pv. phaseolicola (strain 1448A / Race 6)</name>
    <name type="common">Pseudomonas syringae pv. phaseolicola (strain 1448A / Race 6)</name>
    <dbReference type="NCBI Taxonomy" id="264730"/>
    <lineage>
        <taxon>Bacteria</taxon>
        <taxon>Pseudomonadati</taxon>
        <taxon>Pseudomonadota</taxon>
        <taxon>Gammaproteobacteria</taxon>
        <taxon>Pseudomonadales</taxon>
        <taxon>Pseudomonadaceae</taxon>
        <taxon>Pseudomonas</taxon>
    </lineage>
</organism>
<reference key="1">
    <citation type="journal article" date="2005" name="J. Bacteriol.">
        <title>Whole-genome sequence analysis of Pseudomonas syringae pv. phaseolicola 1448A reveals divergence among pathovars in genes involved in virulence and transposition.</title>
        <authorList>
            <person name="Joardar V."/>
            <person name="Lindeberg M."/>
            <person name="Jackson R.W."/>
            <person name="Selengut J."/>
            <person name="Dodson R."/>
            <person name="Brinkac L.M."/>
            <person name="Daugherty S.C."/>
            <person name="DeBoy R.T."/>
            <person name="Durkin A.S."/>
            <person name="Gwinn Giglio M."/>
            <person name="Madupu R."/>
            <person name="Nelson W.C."/>
            <person name="Rosovitz M.J."/>
            <person name="Sullivan S.A."/>
            <person name="Crabtree J."/>
            <person name="Creasy T."/>
            <person name="Davidsen T.M."/>
            <person name="Haft D.H."/>
            <person name="Zafar N."/>
            <person name="Zhou L."/>
            <person name="Halpin R."/>
            <person name="Holley T."/>
            <person name="Khouri H.M."/>
            <person name="Feldblyum T.V."/>
            <person name="White O."/>
            <person name="Fraser C.M."/>
            <person name="Chatterjee A.K."/>
            <person name="Cartinhour S."/>
            <person name="Schneider D."/>
            <person name="Mansfield J.W."/>
            <person name="Collmer A."/>
            <person name="Buell R."/>
        </authorList>
    </citation>
    <scope>NUCLEOTIDE SEQUENCE [LARGE SCALE GENOMIC DNA]</scope>
    <source>
        <strain>1448A / Race 6</strain>
    </source>
</reference>
<comment type="function">
    <text evidence="1">K(+)/H(+) antiporter that extrudes potassium in exchange for external protons and maintains the internal concentration of potassium under toxic levels.</text>
</comment>
<comment type="catalytic activity">
    <reaction evidence="1">
        <text>K(+)(in) + H(+)(out) = K(+)(out) + H(+)(in)</text>
        <dbReference type="Rhea" id="RHEA:29467"/>
        <dbReference type="ChEBI" id="CHEBI:15378"/>
        <dbReference type="ChEBI" id="CHEBI:29103"/>
    </reaction>
    <physiologicalReaction direction="left-to-right" evidence="1">
        <dbReference type="Rhea" id="RHEA:29468"/>
    </physiologicalReaction>
</comment>
<comment type="subcellular location">
    <subcellularLocation>
        <location evidence="1">Cell inner membrane</location>
        <topology evidence="1">Multi-pass membrane protein</topology>
    </subcellularLocation>
</comment>
<comment type="similarity">
    <text evidence="1">Belongs to the monovalent cation:proton antiporter 1 (CPA1) transporter (TC 2.A.36) family. NhaP2 subfamily.</text>
</comment>
<comment type="sequence caution" evidence="2">
    <conflict type="erroneous initiation">
        <sequence resource="EMBL-CDS" id="AAZ34274"/>
    </conflict>
</comment>
<dbReference type="EMBL" id="CP000058">
    <property type="protein sequence ID" value="AAZ34274.1"/>
    <property type="status" value="ALT_INIT"/>
    <property type="molecule type" value="Genomic_DNA"/>
</dbReference>
<dbReference type="RefSeq" id="WP_004666441.1">
    <property type="nucleotide sequence ID" value="NC_005773.3"/>
</dbReference>
<dbReference type="SMR" id="Q48P74"/>
<dbReference type="KEGG" id="psp:PSPPH_0493"/>
<dbReference type="eggNOG" id="COG3263">
    <property type="taxonomic scope" value="Bacteria"/>
</dbReference>
<dbReference type="HOGENOM" id="CLU_005912_9_2_6"/>
<dbReference type="Proteomes" id="UP000000551">
    <property type="component" value="Chromosome"/>
</dbReference>
<dbReference type="GO" id="GO:0005886">
    <property type="term" value="C:plasma membrane"/>
    <property type="evidence" value="ECO:0007669"/>
    <property type="project" value="UniProtKB-SubCell"/>
</dbReference>
<dbReference type="GO" id="GO:0050660">
    <property type="term" value="F:flavin adenine dinucleotide binding"/>
    <property type="evidence" value="ECO:0007669"/>
    <property type="project" value="InterPro"/>
</dbReference>
<dbReference type="GO" id="GO:0015386">
    <property type="term" value="F:potassium:proton antiporter activity"/>
    <property type="evidence" value="ECO:0007669"/>
    <property type="project" value="UniProtKB-UniRule"/>
</dbReference>
<dbReference type="GO" id="GO:0006884">
    <property type="term" value="P:cell volume homeostasis"/>
    <property type="evidence" value="ECO:0007669"/>
    <property type="project" value="InterPro"/>
</dbReference>
<dbReference type="Gene3D" id="1.20.1530.20">
    <property type="match status" value="1"/>
</dbReference>
<dbReference type="Gene3D" id="3.30.465.10">
    <property type="match status" value="1"/>
</dbReference>
<dbReference type="Gene3D" id="3.30.70.1450">
    <property type="entry name" value="Regulator of K+ conductance, C-terminal domain"/>
    <property type="match status" value="1"/>
</dbReference>
<dbReference type="HAMAP" id="MF_01075">
    <property type="entry name" value="NhaP2"/>
    <property type="match status" value="1"/>
</dbReference>
<dbReference type="InterPro" id="IPR006153">
    <property type="entry name" value="Cation/H_exchanger_TM"/>
</dbReference>
<dbReference type="InterPro" id="IPR036318">
    <property type="entry name" value="FAD-bd_PCMH-like_sf"/>
</dbReference>
<dbReference type="InterPro" id="IPR016169">
    <property type="entry name" value="FAD-bd_PCMH_sub2"/>
</dbReference>
<dbReference type="InterPro" id="IPR038770">
    <property type="entry name" value="Na+/solute_symporter_sf"/>
</dbReference>
<dbReference type="InterPro" id="IPR023729">
    <property type="entry name" value="NhaP2"/>
</dbReference>
<dbReference type="InterPro" id="IPR006037">
    <property type="entry name" value="RCK_C"/>
</dbReference>
<dbReference type="InterPro" id="IPR036721">
    <property type="entry name" value="RCK_C_sf"/>
</dbReference>
<dbReference type="InterPro" id="IPR005170">
    <property type="entry name" value="Transptr-assoc_dom"/>
</dbReference>
<dbReference type="NCBIfam" id="NF003714">
    <property type="entry name" value="PRK05326.1-1"/>
    <property type="match status" value="1"/>
</dbReference>
<dbReference type="NCBIfam" id="NF003715">
    <property type="entry name" value="PRK05326.1-2"/>
    <property type="match status" value="1"/>
</dbReference>
<dbReference type="NCBIfam" id="NF003716">
    <property type="entry name" value="PRK05326.1-3"/>
    <property type="match status" value="1"/>
</dbReference>
<dbReference type="PANTHER" id="PTHR32507:SF7">
    <property type="entry name" value="K(+)_H(+) ANTIPORTER NHAP2"/>
    <property type="match status" value="1"/>
</dbReference>
<dbReference type="PANTHER" id="PTHR32507">
    <property type="entry name" value="NA(+)/H(+) ANTIPORTER 1"/>
    <property type="match status" value="1"/>
</dbReference>
<dbReference type="Pfam" id="PF03471">
    <property type="entry name" value="CorC_HlyC"/>
    <property type="match status" value="1"/>
</dbReference>
<dbReference type="Pfam" id="PF00999">
    <property type="entry name" value="Na_H_Exchanger"/>
    <property type="match status" value="1"/>
</dbReference>
<dbReference type="Pfam" id="PF02080">
    <property type="entry name" value="TrkA_C"/>
    <property type="match status" value="1"/>
</dbReference>
<dbReference type="SMART" id="SM01091">
    <property type="entry name" value="CorC_HlyC"/>
    <property type="match status" value="1"/>
</dbReference>
<dbReference type="SUPFAM" id="SSF56176">
    <property type="entry name" value="FAD-binding/transporter-associated domain-like"/>
    <property type="match status" value="1"/>
</dbReference>
<dbReference type="SUPFAM" id="SSF116726">
    <property type="entry name" value="TrkA C-terminal domain-like"/>
    <property type="match status" value="1"/>
</dbReference>
<dbReference type="PROSITE" id="PS51202">
    <property type="entry name" value="RCK_C"/>
    <property type="match status" value="1"/>
</dbReference>
<proteinExistence type="inferred from homology"/>
<keyword id="KW-0050">Antiport</keyword>
<keyword id="KW-0997">Cell inner membrane</keyword>
<keyword id="KW-1003">Cell membrane</keyword>
<keyword id="KW-0406">Ion transport</keyword>
<keyword id="KW-0472">Membrane</keyword>
<keyword id="KW-0630">Potassium</keyword>
<keyword id="KW-0633">Potassium transport</keyword>
<keyword id="KW-0812">Transmembrane</keyword>
<keyword id="KW-1133">Transmembrane helix</keyword>
<keyword id="KW-0813">Transport</keyword>
<accession>Q48P74</accession>
<sequence length="580" mass="61346">MDATTINSLFLVGALLVAASILVSSLSSRLGIPILVIILAVGMVAGVDGGGIIFDNYATAYLVGNLALAVILLDGGLRTRVASFRVALWPALSLATVGVLITTVLTGMVAAWLFNLSVIQGLLIGAIVGSTDAAAVFSLLGGKGLNERVTASLEIESGSNDPMAVFLTVTLIGMLASGQTGLHWGLLGHLIQEFGIGSFIGLGGGWILLQLVNRINLAAGLYPILVIAGGLAIFALTNAIHGSGFLAVYLCGLVLGNRPIRSRHGILHMLDGMAWLAQIGMFLVLGLLVTPHDLLPIAIPALGLALWMILVARPLSVMVGLLPFKAFHGREKAFIAWVGLRGAVPIILAVFPLMAGLPNAQLYFNLAFFIVLVSLLLQGTSLPWVAKLLKVTVPPDPAPISRAALEVHVTSEWELFVYRLGAEKWCIGAALRELKMPEGTRIAALFRGQQLLHPSGSTTLEVGDLLCVIGHEHDLPALGKLFSQAPQRGLDLRFFGDFVLEGDARLGEVAALYGLKLDGIDPGMPLSQFIVQKNRGEPVVGDQIEWNGTIWTVAVMDGNKIQKVGVKFPEGTRPGPGLFL</sequence>
<protein>
    <recommendedName>
        <fullName evidence="1">K(+)/H(+) antiporter NhaP2</fullName>
    </recommendedName>
    <alternativeName>
        <fullName evidence="1">Potassium/proton antiporter NhaP2</fullName>
    </alternativeName>
</protein>